<reference key="1">
    <citation type="journal article" date="2008" name="Antimicrob. Agents Chemother.">
        <title>Mutated response regulator graR is responsible for phenotypic conversion of Staphylococcus aureus from heterogeneous vancomycin-intermediate resistance to vancomycin-intermediate resistance.</title>
        <authorList>
            <person name="Neoh H.-M."/>
            <person name="Cui L."/>
            <person name="Yuzawa H."/>
            <person name="Takeuchi F."/>
            <person name="Matsuo M."/>
            <person name="Hiramatsu K."/>
        </authorList>
    </citation>
    <scope>NUCLEOTIDE SEQUENCE [LARGE SCALE GENOMIC DNA]</scope>
    <source>
        <strain>Mu3 / ATCC 700698</strain>
    </source>
</reference>
<dbReference type="EMBL" id="AP009324">
    <property type="protein sequence ID" value="BAF78445.1"/>
    <property type="molecule type" value="Genomic_DNA"/>
</dbReference>
<dbReference type="RefSeq" id="WP_000048060.1">
    <property type="nucleotide sequence ID" value="NZ_CTYB01000003.1"/>
</dbReference>
<dbReference type="SMR" id="A7X2X5"/>
<dbReference type="GeneID" id="98345946"/>
<dbReference type="KEGG" id="saw:SAHV_1562"/>
<dbReference type="HOGENOM" id="CLU_159258_3_2_9"/>
<dbReference type="GO" id="GO:1990904">
    <property type="term" value="C:ribonucleoprotein complex"/>
    <property type="evidence" value="ECO:0007669"/>
    <property type="project" value="UniProtKB-KW"/>
</dbReference>
<dbReference type="GO" id="GO:0005840">
    <property type="term" value="C:ribosome"/>
    <property type="evidence" value="ECO:0007669"/>
    <property type="project" value="UniProtKB-KW"/>
</dbReference>
<dbReference type="GO" id="GO:0003735">
    <property type="term" value="F:structural constituent of ribosome"/>
    <property type="evidence" value="ECO:0007669"/>
    <property type="project" value="InterPro"/>
</dbReference>
<dbReference type="GO" id="GO:0006412">
    <property type="term" value="P:translation"/>
    <property type="evidence" value="ECO:0007669"/>
    <property type="project" value="UniProtKB-UniRule"/>
</dbReference>
<dbReference type="Gene3D" id="1.20.5.1150">
    <property type="entry name" value="Ribosomal protein S8"/>
    <property type="match status" value="1"/>
</dbReference>
<dbReference type="HAMAP" id="MF_00358">
    <property type="entry name" value="Ribosomal_bS21"/>
    <property type="match status" value="1"/>
</dbReference>
<dbReference type="InterPro" id="IPR001911">
    <property type="entry name" value="Ribosomal_bS21"/>
</dbReference>
<dbReference type="InterPro" id="IPR018278">
    <property type="entry name" value="Ribosomal_bS21_CS"/>
</dbReference>
<dbReference type="InterPro" id="IPR038380">
    <property type="entry name" value="Ribosomal_bS21_sf"/>
</dbReference>
<dbReference type="NCBIfam" id="TIGR00030">
    <property type="entry name" value="S21p"/>
    <property type="match status" value="1"/>
</dbReference>
<dbReference type="PANTHER" id="PTHR21109">
    <property type="entry name" value="MITOCHONDRIAL 28S RIBOSOMAL PROTEIN S21"/>
    <property type="match status" value="1"/>
</dbReference>
<dbReference type="PANTHER" id="PTHR21109:SF22">
    <property type="entry name" value="SMALL RIBOSOMAL SUBUNIT PROTEIN BS21"/>
    <property type="match status" value="1"/>
</dbReference>
<dbReference type="Pfam" id="PF01165">
    <property type="entry name" value="Ribosomal_S21"/>
    <property type="match status" value="1"/>
</dbReference>
<dbReference type="PRINTS" id="PR00976">
    <property type="entry name" value="RIBOSOMALS21"/>
</dbReference>
<dbReference type="PROSITE" id="PS01181">
    <property type="entry name" value="RIBOSOMAL_S21"/>
    <property type="match status" value="1"/>
</dbReference>
<proteinExistence type="inferred from homology"/>
<gene>
    <name evidence="1" type="primary">rpsU</name>
    <name type="ordered locus">SAHV_1562</name>
</gene>
<feature type="chain" id="PRO_1000005176" description="Small ribosomal subunit protein bS21">
    <location>
        <begin position="1"/>
        <end position="58"/>
    </location>
</feature>
<name>RS21_STAA1</name>
<keyword id="KW-0687">Ribonucleoprotein</keyword>
<keyword id="KW-0689">Ribosomal protein</keyword>
<protein>
    <recommendedName>
        <fullName evidence="1">Small ribosomal subunit protein bS21</fullName>
    </recommendedName>
    <alternativeName>
        <fullName evidence="2">30S ribosomal protein S21</fullName>
    </alternativeName>
</protein>
<organism>
    <name type="scientific">Staphylococcus aureus (strain Mu3 / ATCC 700698)</name>
    <dbReference type="NCBI Taxonomy" id="418127"/>
    <lineage>
        <taxon>Bacteria</taxon>
        <taxon>Bacillati</taxon>
        <taxon>Bacillota</taxon>
        <taxon>Bacilli</taxon>
        <taxon>Bacillales</taxon>
        <taxon>Staphylococcaceae</taxon>
        <taxon>Staphylococcus</taxon>
    </lineage>
</organism>
<evidence type="ECO:0000255" key="1">
    <source>
        <dbReference type="HAMAP-Rule" id="MF_00358"/>
    </source>
</evidence>
<evidence type="ECO:0000305" key="2"/>
<comment type="similarity">
    <text evidence="1">Belongs to the bacterial ribosomal protein bS21 family.</text>
</comment>
<accession>A7X2X5</accession>
<sequence length="58" mass="6972">MSKTVVRKNESLEDALRRFKRSVSKSGTIQEVRKREFYEKPSVKRKKKSEAARKRKFK</sequence>